<proteinExistence type="predicted"/>
<protein>
    <recommendedName>
        <fullName>Uncharacterized protein Lin2600</fullName>
    </recommendedName>
</protein>
<sequence>MRKNWTDEEIRVLQNNYEYVDTEIIANFLNRSYHSIKNKAVRLGISKNSVWTEDEDIYLEYFVYENDDNISKAAEFLGRTKDAVINRLAKLRKRDSSVSFIRRPWTKKEDEILKNNYIIMSNDQLAERLRRTKASVAARKVLLGLTNKHMSKKDDKMIRHLGNQGYTIKEISAEMNLPYCLIKNYIRNHRINYRRESKNEMNGWRKEADATYSHYINSKKIKEEQA</sequence>
<evidence type="ECO:0000305" key="1"/>
<accession>Q928D5</accession>
<reference key="1">
    <citation type="journal article" date="2001" name="Science">
        <title>Comparative genomics of Listeria species.</title>
        <authorList>
            <person name="Glaser P."/>
            <person name="Frangeul L."/>
            <person name="Buchrieser C."/>
            <person name="Rusniok C."/>
            <person name="Amend A."/>
            <person name="Baquero F."/>
            <person name="Berche P."/>
            <person name="Bloecker H."/>
            <person name="Brandt P."/>
            <person name="Chakraborty T."/>
            <person name="Charbit A."/>
            <person name="Chetouani F."/>
            <person name="Couve E."/>
            <person name="de Daruvar A."/>
            <person name="Dehoux P."/>
            <person name="Domann E."/>
            <person name="Dominguez-Bernal G."/>
            <person name="Duchaud E."/>
            <person name="Durant L."/>
            <person name="Dussurget O."/>
            <person name="Entian K.-D."/>
            <person name="Fsihi H."/>
            <person name="Garcia-del Portillo F."/>
            <person name="Garrido P."/>
            <person name="Gautier L."/>
            <person name="Goebel W."/>
            <person name="Gomez-Lopez N."/>
            <person name="Hain T."/>
            <person name="Hauf J."/>
            <person name="Jackson D."/>
            <person name="Jones L.-M."/>
            <person name="Kaerst U."/>
            <person name="Kreft J."/>
            <person name="Kuhn M."/>
            <person name="Kunst F."/>
            <person name="Kurapkat G."/>
            <person name="Madueno E."/>
            <person name="Maitournam A."/>
            <person name="Mata Vicente J."/>
            <person name="Ng E."/>
            <person name="Nedjari H."/>
            <person name="Nordsiek G."/>
            <person name="Novella S."/>
            <person name="de Pablos B."/>
            <person name="Perez-Diaz J.-C."/>
            <person name="Purcell R."/>
            <person name="Remmel B."/>
            <person name="Rose M."/>
            <person name="Schlueter T."/>
            <person name="Simoes N."/>
            <person name="Tierrez A."/>
            <person name="Vazquez-Boland J.-A."/>
            <person name="Voss H."/>
            <person name="Wehland J."/>
            <person name="Cossart P."/>
        </authorList>
    </citation>
    <scope>NUCLEOTIDE SEQUENCE [LARGE SCALE GENOMIC DNA]</scope>
    <source>
        <strain>ATCC BAA-680 / CLIP 11262</strain>
    </source>
</reference>
<comment type="similarity">
    <text evidence="1">To L.innocua lin1255, lin1742 and lin2408.</text>
</comment>
<gene>
    <name type="ordered locus">lin2600</name>
</gene>
<organism>
    <name type="scientific">Listeria innocua serovar 6a (strain ATCC BAA-680 / CLIP 11262)</name>
    <dbReference type="NCBI Taxonomy" id="272626"/>
    <lineage>
        <taxon>Bacteria</taxon>
        <taxon>Bacillati</taxon>
        <taxon>Bacillota</taxon>
        <taxon>Bacilli</taxon>
        <taxon>Bacillales</taxon>
        <taxon>Listeriaceae</taxon>
        <taxon>Listeria</taxon>
    </lineage>
</organism>
<dbReference type="EMBL" id="AL596173">
    <property type="protein sequence ID" value="CAC97827.1"/>
    <property type="molecule type" value="Genomic_DNA"/>
</dbReference>
<dbReference type="PIR" id="AC1757">
    <property type="entry name" value="AC1757"/>
</dbReference>
<dbReference type="RefSeq" id="WP_010991290.1">
    <property type="nucleotide sequence ID" value="NC_003212.1"/>
</dbReference>
<dbReference type="SMR" id="Q928D5"/>
<dbReference type="STRING" id="272626.gene:17566980"/>
<dbReference type="KEGG" id="lin:lin2600"/>
<dbReference type="eggNOG" id="ENOG5032BT5">
    <property type="taxonomic scope" value="Bacteria"/>
</dbReference>
<dbReference type="HOGENOM" id="CLU_106666_0_0_9"/>
<dbReference type="OrthoDB" id="1669646at2"/>
<dbReference type="Proteomes" id="UP000002513">
    <property type="component" value="Chromosome"/>
</dbReference>
<name>Y2600_LISIN</name>
<feature type="chain" id="PRO_0000210816" description="Uncharacterized protein Lin2600">
    <location>
        <begin position="1"/>
        <end position="226"/>
    </location>
</feature>